<sequence length="367" mass="42413">MTPNILPIESYDHQLAEKSARLKAMMLPFQAPEPEIFRSPADHYRMRAEFRVWHDEDDLYHIMFDQQTKQRIRVEQFPVASRLINRLMDALMTAIRAEPLLRRKLFQIDYLSTLSGKLIASLLYHRQLDEEWQQKALELRDQLRAQGFDLQLIGRAAKTKIMLDHDYIDEVLPVAGREMIYRQVENSFTQPNAAVNIHMLEWALDVTQGATGDLLELYCGNGNFSLALARNFERVLATEIAKPSVAAAQYNIAANNIDNVQIIRMSAEEFTQAMQGVREFNRLKGIDLGSYNCETIFVDPPRSGLDHETVKLVQAYPRILYISCNPETLCANLEQLQHTHKISRLALFDQFPYTHHMECGVLLEKRH</sequence>
<organism>
    <name type="scientific">Yersinia pestis</name>
    <dbReference type="NCBI Taxonomy" id="632"/>
    <lineage>
        <taxon>Bacteria</taxon>
        <taxon>Pseudomonadati</taxon>
        <taxon>Pseudomonadota</taxon>
        <taxon>Gammaproteobacteria</taxon>
        <taxon>Enterobacterales</taxon>
        <taxon>Yersiniaceae</taxon>
        <taxon>Yersinia</taxon>
    </lineage>
</organism>
<evidence type="ECO:0000255" key="1">
    <source>
        <dbReference type="HAMAP-Rule" id="MF_01011"/>
    </source>
</evidence>
<comment type="function">
    <text evidence="1">Dual-specificity methyltransferase that catalyzes the formation of 5-methyluridine at position 54 (m5U54) in all tRNAs, and that of position 341 (m5U341) in tmRNA (transfer-mRNA).</text>
</comment>
<comment type="catalytic activity">
    <reaction evidence="1">
        <text>uridine(54) in tRNA + S-adenosyl-L-methionine = 5-methyluridine(54) in tRNA + S-adenosyl-L-homocysteine + H(+)</text>
        <dbReference type="Rhea" id="RHEA:42712"/>
        <dbReference type="Rhea" id="RHEA-COMP:10167"/>
        <dbReference type="Rhea" id="RHEA-COMP:10193"/>
        <dbReference type="ChEBI" id="CHEBI:15378"/>
        <dbReference type="ChEBI" id="CHEBI:57856"/>
        <dbReference type="ChEBI" id="CHEBI:59789"/>
        <dbReference type="ChEBI" id="CHEBI:65315"/>
        <dbReference type="ChEBI" id="CHEBI:74447"/>
        <dbReference type="EC" id="2.1.1.35"/>
    </reaction>
</comment>
<comment type="catalytic activity">
    <reaction evidence="1">
        <text>uridine(341) in tmRNA + S-adenosyl-L-methionine = 5-methyluridine(341) in tmRNA + S-adenosyl-L-homocysteine + H(+)</text>
        <dbReference type="Rhea" id="RHEA:43612"/>
        <dbReference type="Rhea" id="RHEA-COMP:10630"/>
        <dbReference type="Rhea" id="RHEA-COMP:10631"/>
        <dbReference type="ChEBI" id="CHEBI:15378"/>
        <dbReference type="ChEBI" id="CHEBI:57856"/>
        <dbReference type="ChEBI" id="CHEBI:59789"/>
        <dbReference type="ChEBI" id="CHEBI:65315"/>
        <dbReference type="ChEBI" id="CHEBI:74447"/>
    </reaction>
</comment>
<comment type="similarity">
    <text evidence="1">Belongs to the class I-like SAM-binding methyltransferase superfamily. RNA M5U methyltransferase family. TrmA subfamily.</text>
</comment>
<proteinExistence type="inferred from homology"/>
<keyword id="KW-0489">Methyltransferase</keyword>
<keyword id="KW-1185">Reference proteome</keyword>
<keyword id="KW-0949">S-adenosyl-L-methionine</keyword>
<keyword id="KW-0808">Transferase</keyword>
<keyword id="KW-0819">tRNA processing</keyword>
<name>TRMA_YERPE</name>
<gene>
    <name evidence="1" type="primary">trmA</name>
    <name type="ordered locus">YPO3911</name>
    <name type="ordered locus">y0324</name>
    <name type="ordered locus">YP_3137</name>
</gene>
<reference key="1">
    <citation type="journal article" date="2001" name="Nature">
        <title>Genome sequence of Yersinia pestis, the causative agent of plague.</title>
        <authorList>
            <person name="Parkhill J."/>
            <person name="Wren B.W."/>
            <person name="Thomson N.R."/>
            <person name="Titball R.W."/>
            <person name="Holden M.T.G."/>
            <person name="Prentice M.B."/>
            <person name="Sebaihia M."/>
            <person name="James K.D."/>
            <person name="Churcher C.M."/>
            <person name="Mungall K.L."/>
            <person name="Baker S."/>
            <person name="Basham D."/>
            <person name="Bentley S.D."/>
            <person name="Brooks K."/>
            <person name="Cerdeno-Tarraga A.-M."/>
            <person name="Chillingworth T."/>
            <person name="Cronin A."/>
            <person name="Davies R.M."/>
            <person name="Davis P."/>
            <person name="Dougan G."/>
            <person name="Feltwell T."/>
            <person name="Hamlin N."/>
            <person name="Holroyd S."/>
            <person name="Jagels K."/>
            <person name="Karlyshev A.V."/>
            <person name="Leather S."/>
            <person name="Moule S."/>
            <person name="Oyston P.C.F."/>
            <person name="Quail M.A."/>
            <person name="Rutherford K.M."/>
            <person name="Simmonds M."/>
            <person name="Skelton J."/>
            <person name="Stevens K."/>
            <person name="Whitehead S."/>
            <person name="Barrell B.G."/>
        </authorList>
    </citation>
    <scope>NUCLEOTIDE SEQUENCE [LARGE SCALE GENOMIC DNA]</scope>
    <source>
        <strain>CO-92 / Biovar Orientalis</strain>
    </source>
</reference>
<reference key="2">
    <citation type="journal article" date="2002" name="J. Bacteriol.">
        <title>Genome sequence of Yersinia pestis KIM.</title>
        <authorList>
            <person name="Deng W."/>
            <person name="Burland V."/>
            <person name="Plunkett G. III"/>
            <person name="Boutin A."/>
            <person name="Mayhew G.F."/>
            <person name="Liss P."/>
            <person name="Perna N.T."/>
            <person name="Rose D.J."/>
            <person name="Mau B."/>
            <person name="Zhou S."/>
            <person name="Schwartz D.C."/>
            <person name="Fetherston J.D."/>
            <person name="Lindler L.E."/>
            <person name="Brubaker R.R."/>
            <person name="Plano G.V."/>
            <person name="Straley S.C."/>
            <person name="McDonough K.A."/>
            <person name="Nilles M.L."/>
            <person name="Matson J.S."/>
            <person name="Blattner F.R."/>
            <person name="Perry R.D."/>
        </authorList>
    </citation>
    <scope>NUCLEOTIDE SEQUENCE [LARGE SCALE GENOMIC DNA]</scope>
    <source>
        <strain>KIM10+ / Biovar Mediaevalis</strain>
    </source>
</reference>
<reference key="3">
    <citation type="journal article" date="2004" name="DNA Res.">
        <title>Complete genome sequence of Yersinia pestis strain 91001, an isolate avirulent to humans.</title>
        <authorList>
            <person name="Song Y."/>
            <person name="Tong Z."/>
            <person name="Wang J."/>
            <person name="Wang L."/>
            <person name="Guo Z."/>
            <person name="Han Y."/>
            <person name="Zhang J."/>
            <person name="Pei D."/>
            <person name="Zhou D."/>
            <person name="Qin H."/>
            <person name="Pang X."/>
            <person name="Han Y."/>
            <person name="Zhai J."/>
            <person name="Li M."/>
            <person name="Cui B."/>
            <person name="Qi Z."/>
            <person name="Jin L."/>
            <person name="Dai R."/>
            <person name="Chen F."/>
            <person name="Li S."/>
            <person name="Ye C."/>
            <person name="Du Z."/>
            <person name="Lin W."/>
            <person name="Wang J."/>
            <person name="Yu J."/>
            <person name="Yang H."/>
            <person name="Wang J."/>
            <person name="Huang P."/>
            <person name="Yang R."/>
        </authorList>
    </citation>
    <scope>NUCLEOTIDE SEQUENCE [LARGE SCALE GENOMIC DNA]</scope>
    <source>
        <strain>91001 / Biovar Mediaevalis</strain>
    </source>
</reference>
<feature type="chain" id="PRO_0000161884" description="tRNA/tmRNA (uracil-C(5))-methyltransferase">
    <location>
        <begin position="1"/>
        <end position="367"/>
    </location>
</feature>
<feature type="active site" description="Nucleophile" evidence="1">
    <location>
        <position position="324"/>
    </location>
</feature>
<feature type="active site" description="Proton acceptor" evidence="1">
    <location>
        <position position="358"/>
    </location>
</feature>
<feature type="binding site" evidence="1">
    <location>
        <position position="190"/>
    </location>
    <ligand>
        <name>S-adenosyl-L-methionine</name>
        <dbReference type="ChEBI" id="CHEBI:59789"/>
    </ligand>
</feature>
<feature type="binding site" evidence="1">
    <location>
        <position position="218"/>
    </location>
    <ligand>
        <name>S-adenosyl-L-methionine</name>
        <dbReference type="ChEBI" id="CHEBI:59789"/>
    </ligand>
</feature>
<feature type="binding site" evidence="1">
    <location>
        <position position="223"/>
    </location>
    <ligand>
        <name>S-adenosyl-L-methionine</name>
        <dbReference type="ChEBI" id="CHEBI:59789"/>
    </ligand>
</feature>
<feature type="binding site" evidence="1">
    <location>
        <position position="239"/>
    </location>
    <ligand>
        <name>S-adenosyl-L-methionine</name>
        <dbReference type="ChEBI" id="CHEBI:59789"/>
    </ligand>
</feature>
<feature type="binding site" evidence="1">
    <location>
        <position position="299"/>
    </location>
    <ligand>
        <name>S-adenosyl-L-methionine</name>
        <dbReference type="ChEBI" id="CHEBI:59789"/>
    </ligand>
</feature>
<accession>Q8ZAA0</accession>
<accession>Q0WAA2</accession>
<dbReference type="EC" id="2.1.1.-" evidence="1"/>
<dbReference type="EC" id="2.1.1.35" evidence="1"/>
<dbReference type="EMBL" id="AL590842">
    <property type="protein sequence ID" value="CAL22496.1"/>
    <property type="molecule type" value="Genomic_DNA"/>
</dbReference>
<dbReference type="EMBL" id="AE009952">
    <property type="protein sequence ID" value="AAM83915.1"/>
    <property type="molecule type" value="Genomic_DNA"/>
</dbReference>
<dbReference type="EMBL" id="AE017042">
    <property type="protein sequence ID" value="AAS63307.1"/>
    <property type="molecule type" value="Genomic_DNA"/>
</dbReference>
<dbReference type="PIR" id="AE0476">
    <property type="entry name" value="AE0476"/>
</dbReference>
<dbReference type="RefSeq" id="WP_002209474.1">
    <property type="nucleotide sequence ID" value="NZ_WUCM01000072.1"/>
</dbReference>
<dbReference type="RefSeq" id="YP_002348786.1">
    <property type="nucleotide sequence ID" value="NC_003143.1"/>
</dbReference>
<dbReference type="SMR" id="Q8ZAA0"/>
<dbReference type="STRING" id="214092.YPO3911"/>
<dbReference type="PaxDb" id="214092-YPO3911"/>
<dbReference type="DNASU" id="1145271"/>
<dbReference type="EnsemblBacteria" id="AAS63307">
    <property type="protein sequence ID" value="AAS63307"/>
    <property type="gene ID" value="YP_3137"/>
</dbReference>
<dbReference type="GeneID" id="57974789"/>
<dbReference type="KEGG" id="ype:YPO3911"/>
<dbReference type="KEGG" id="ypk:y0324"/>
<dbReference type="KEGG" id="ypm:YP_3137"/>
<dbReference type="PATRIC" id="fig|214092.21.peg.4440"/>
<dbReference type="eggNOG" id="COG2265">
    <property type="taxonomic scope" value="Bacteria"/>
</dbReference>
<dbReference type="HOGENOM" id="CLU_043022_0_0_6"/>
<dbReference type="OMA" id="QCNTIFV"/>
<dbReference type="OrthoDB" id="9804590at2"/>
<dbReference type="Proteomes" id="UP000000815">
    <property type="component" value="Chromosome"/>
</dbReference>
<dbReference type="Proteomes" id="UP000001019">
    <property type="component" value="Chromosome"/>
</dbReference>
<dbReference type="Proteomes" id="UP000002490">
    <property type="component" value="Chromosome"/>
</dbReference>
<dbReference type="GO" id="GO:0005829">
    <property type="term" value="C:cytosol"/>
    <property type="evidence" value="ECO:0000318"/>
    <property type="project" value="GO_Central"/>
</dbReference>
<dbReference type="GO" id="GO:0019843">
    <property type="term" value="F:rRNA binding"/>
    <property type="evidence" value="ECO:0000318"/>
    <property type="project" value="GO_Central"/>
</dbReference>
<dbReference type="GO" id="GO:0030697">
    <property type="term" value="F:tRNA (uracil(54)-C5)-methyltransferase activity, S-adenosyl methionine-dependent"/>
    <property type="evidence" value="ECO:0000318"/>
    <property type="project" value="GO_Central"/>
</dbReference>
<dbReference type="GO" id="GO:0000049">
    <property type="term" value="F:tRNA binding"/>
    <property type="evidence" value="ECO:0000318"/>
    <property type="project" value="GO_Central"/>
</dbReference>
<dbReference type="GO" id="GO:0030488">
    <property type="term" value="P:tRNA methylation"/>
    <property type="evidence" value="ECO:0007669"/>
    <property type="project" value="UniProtKB-UniRule"/>
</dbReference>
<dbReference type="CDD" id="cd02440">
    <property type="entry name" value="AdoMet_MTases"/>
    <property type="match status" value="1"/>
</dbReference>
<dbReference type="FunFam" id="2.40.50.1070:FF:000001">
    <property type="entry name" value="tRNA/tmRNA (uracil-C(5))-methyltransferase"/>
    <property type="match status" value="1"/>
</dbReference>
<dbReference type="FunFam" id="3.40.50.150:FF:000012">
    <property type="entry name" value="tRNA/tmRNA (uracil-C(5))-methyltransferase"/>
    <property type="match status" value="1"/>
</dbReference>
<dbReference type="Gene3D" id="2.40.50.1070">
    <property type="match status" value="1"/>
</dbReference>
<dbReference type="Gene3D" id="3.40.50.150">
    <property type="entry name" value="Vaccinia Virus protein VP39"/>
    <property type="match status" value="1"/>
</dbReference>
<dbReference type="HAMAP" id="MF_01011">
    <property type="entry name" value="RNA_methyltr_TrmA"/>
    <property type="match status" value="1"/>
</dbReference>
<dbReference type="InterPro" id="IPR030390">
    <property type="entry name" value="MeTrfase_TrmA_AS"/>
</dbReference>
<dbReference type="InterPro" id="IPR030391">
    <property type="entry name" value="MeTrfase_TrmA_CS"/>
</dbReference>
<dbReference type="InterPro" id="IPR029063">
    <property type="entry name" value="SAM-dependent_MTases_sf"/>
</dbReference>
<dbReference type="InterPro" id="IPR011869">
    <property type="entry name" value="TrmA_MeTrfase"/>
</dbReference>
<dbReference type="InterPro" id="IPR010280">
    <property type="entry name" value="U5_MeTrfase_fam"/>
</dbReference>
<dbReference type="NCBIfam" id="TIGR02143">
    <property type="entry name" value="trmA_only"/>
    <property type="match status" value="1"/>
</dbReference>
<dbReference type="PANTHER" id="PTHR47790">
    <property type="entry name" value="TRNA/TMRNA (URACIL-C(5))-METHYLTRANSFERASE"/>
    <property type="match status" value="1"/>
</dbReference>
<dbReference type="PANTHER" id="PTHR47790:SF2">
    <property type="entry name" value="TRNA_TMRNA (URACIL-C(5))-METHYLTRANSFERASE"/>
    <property type="match status" value="1"/>
</dbReference>
<dbReference type="Pfam" id="PF05958">
    <property type="entry name" value="tRNA_U5-meth_tr"/>
    <property type="match status" value="1"/>
</dbReference>
<dbReference type="SUPFAM" id="SSF53335">
    <property type="entry name" value="S-adenosyl-L-methionine-dependent methyltransferases"/>
    <property type="match status" value="1"/>
</dbReference>
<dbReference type="PROSITE" id="PS51687">
    <property type="entry name" value="SAM_MT_RNA_M5U"/>
    <property type="match status" value="1"/>
</dbReference>
<dbReference type="PROSITE" id="PS01230">
    <property type="entry name" value="TRMA_1"/>
    <property type="match status" value="1"/>
</dbReference>
<dbReference type="PROSITE" id="PS01231">
    <property type="entry name" value="TRMA_2"/>
    <property type="match status" value="1"/>
</dbReference>
<protein>
    <recommendedName>
        <fullName evidence="1">tRNA/tmRNA (uracil-C(5))-methyltransferase</fullName>
        <ecNumber evidence="1">2.1.1.-</ecNumber>
        <ecNumber evidence="1">2.1.1.35</ecNumber>
    </recommendedName>
    <alternativeName>
        <fullName evidence="1">tRNA (uracil(54)-C(5))-methyltransferase</fullName>
    </alternativeName>
    <alternativeName>
        <fullName evidence="1">tRNA(m5U54)-methyltransferase</fullName>
        <shortName evidence="1">RUMT</shortName>
    </alternativeName>
    <alternativeName>
        <fullName evidence="1">tmRNA (uracil(341)-C(5))-methyltransferase</fullName>
    </alternativeName>
</protein>